<gene>
    <name type="primary">CCBE1</name>
    <name type="synonym">KIAA1983</name>
    <name type="ORF">UNQ1921/PRO4395</name>
</gene>
<accession>Q6UXH8</accession>
<accession>Q6MZX5</accession>
<accession>Q86SS2</accession>
<accession>Q8TF19</accession>
<feature type="signal peptide" evidence="1">
    <location>
        <begin position="1"/>
        <end position="34"/>
    </location>
</feature>
<feature type="chain" id="PRO_0000279516" description="Collagen and calcium-binding EGF domain-containing protein 1">
    <location>
        <begin position="35"/>
        <end position="406"/>
    </location>
</feature>
<feature type="domain" description="EGF-like; calcium-binding" evidence="2">
    <location>
        <begin position="134"/>
        <end position="175"/>
    </location>
</feature>
<feature type="domain" description="Collagen-like 1">
    <location>
        <begin position="245"/>
        <end position="290"/>
    </location>
</feature>
<feature type="domain" description="Collagen-like 2">
    <location>
        <begin position="300"/>
        <end position="333"/>
    </location>
</feature>
<feature type="region of interest" description="Disordered" evidence="3">
    <location>
        <begin position="244"/>
        <end position="335"/>
    </location>
</feature>
<feature type="region of interest" description="Disordered" evidence="3">
    <location>
        <begin position="360"/>
        <end position="406"/>
    </location>
</feature>
<feature type="compositionally biased region" description="Pro residues" evidence="3">
    <location>
        <begin position="270"/>
        <end position="279"/>
    </location>
</feature>
<feature type="compositionally biased region" description="Low complexity" evidence="3">
    <location>
        <begin position="281"/>
        <end position="292"/>
    </location>
</feature>
<feature type="compositionally biased region" description="Basic and acidic residues" evidence="3">
    <location>
        <begin position="386"/>
        <end position="406"/>
    </location>
</feature>
<feature type="glycosylation site" description="N-linked (GlcNAc...) asparagine" evidence="1">
    <location>
        <position position="142"/>
    </location>
</feature>
<feature type="glycosylation site" description="N-linked (GlcNAc...) asparagine" evidence="1">
    <location>
        <position position="182"/>
    </location>
</feature>
<feature type="glycosylation site" description="O-linked (Xyl...) (chondroitin sulfate) serine" evidence="7 8 9 10">
    <location>
        <position position="385"/>
    </location>
</feature>
<feature type="disulfide bond" evidence="2">
    <location>
        <begin position="138"/>
        <end position="150"/>
    </location>
</feature>
<feature type="disulfide bond" evidence="2">
    <location>
        <begin position="146"/>
        <end position="159"/>
    </location>
</feature>
<feature type="disulfide bond" evidence="2">
    <location>
        <begin position="161"/>
        <end position="174"/>
    </location>
</feature>
<feature type="splice variant" id="VSP_023470" description="In isoform 2." evidence="12">
    <location>
        <begin position="1"/>
        <end position="271"/>
    </location>
</feature>
<feature type="splice variant" id="VSP_023469" description="In isoform 3." evidence="11">
    <location>
        <begin position="1"/>
        <end position="191"/>
    </location>
</feature>
<feature type="splice variant" id="VSP_023471" description="In isoform 2." evidence="12">
    <original>MPGPPGQPGPRGSMGPMGPSPDLSHIKQGRRGPV</original>
    <variation>MQLTWASISLVTRCWPQTPTFQDLLACLGARALP</variation>
    <location>
        <begin position="272"/>
        <end position="305"/>
    </location>
</feature>
<feature type="sequence variant" id="VAR_063746" description="In HKLLS1; dbSNP:rs121908250." evidence="5 6">
    <original>C</original>
    <variation>S</variation>
    <location>
        <position position="75"/>
    </location>
</feature>
<feature type="sequence variant" id="VAR_063747" description="In HKLLS1; dbSNP:rs121908251." evidence="6">
    <original>C</original>
    <variation>S</variation>
    <location>
        <position position="102"/>
    </location>
</feature>
<feature type="sequence variant" id="VAR_063748" description="In HKLLS1; dbSNP:rs121908253." evidence="6">
    <original>R</original>
    <variation>C</variation>
    <location>
        <position position="158"/>
    </location>
</feature>
<feature type="sequence variant" id="VAR_063749" description="In HKLLS1; dbSNP:rs121908254." evidence="6">
    <original>C</original>
    <variation>R</variation>
    <location>
        <position position="174"/>
    </location>
</feature>
<feature type="sequence variant" id="VAR_048971" description="In dbSNP:rs11659589.">
    <original>V</original>
    <variation>G</variation>
    <location>
        <position position="193"/>
    </location>
</feature>
<feature type="sequence variant" id="VAR_063750" description="In HKLLS1; dbSNP:rs121908252." evidence="6">
    <original>G</original>
    <variation>R</variation>
    <location>
        <position position="327"/>
    </location>
</feature>
<sequence>MVPPPPSRGGAARGQLGRSLGPLLLLLALGHTWTYREEPEDGDREICSESKIATTKYPCLKSSGELTTCYRKKCCKGYKFVLGQCIPEDYDVCAEAPCEQQCTDNFGRVLCTCYPGYRYDRERHRKREKPYCLDIDECASSNGTLCAHICINTLGSYRCECREGYIREDDGKTCTRGDKYPNDTGHEKSENMVKAGTCCATCKEFYQMKQTVLQLKQKIALLPNNAADLGKYITGDKVLASNTYLPGPPGLPGGQGPPGSPGPKGSPGFPGMPGPPGQPGPRGSMGPMGPSPDLSHIKQGRRGPVGPPGAPGRDGSKGERGAPGPRGSPGPPGSFDFLLLMLADIRNDITELQEKVFGHRTHSSAEEFPLPQEFPSYPEAMDLGSGDDHPRRTETRDLRAPRDFYP</sequence>
<reference key="1">
    <citation type="journal article" date="2001" name="DNA Res.">
        <title>Prediction of the coding sequences of unidentified human genes. XXII. The complete sequences of 50 new cDNA clones which code for large proteins.</title>
        <authorList>
            <person name="Nagase T."/>
            <person name="Kikuno R."/>
            <person name="Ohara O."/>
        </authorList>
    </citation>
    <scope>NUCLEOTIDE SEQUENCE [LARGE SCALE MRNA] (ISOFORM 1)</scope>
    <source>
        <tissue>Brain</tissue>
    </source>
</reference>
<reference key="2">
    <citation type="journal article" date="2003" name="Genome Res.">
        <title>The secreted protein discovery initiative (SPDI), a large-scale effort to identify novel human secreted and transmembrane proteins: a bioinformatics assessment.</title>
        <authorList>
            <person name="Clark H.F."/>
            <person name="Gurney A.L."/>
            <person name="Abaya E."/>
            <person name="Baker K."/>
            <person name="Baldwin D.T."/>
            <person name="Brush J."/>
            <person name="Chen J."/>
            <person name="Chow B."/>
            <person name="Chui C."/>
            <person name="Crowley C."/>
            <person name="Currell B."/>
            <person name="Deuel B."/>
            <person name="Dowd P."/>
            <person name="Eaton D."/>
            <person name="Foster J.S."/>
            <person name="Grimaldi C."/>
            <person name="Gu Q."/>
            <person name="Hass P.E."/>
            <person name="Heldens S."/>
            <person name="Huang A."/>
            <person name="Kim H.S."/>
            <person name="Klimowski L."/>
            <person name="Jin Y."/>
            <person name="Johnson S."/>
            <person name="Lee J."/>
            <person name="Lewis L."/>
            <person name="Liao D."/>
            <person name="Mark M.R."/>
            <person name="Robbie E."/>
            <person name="Sanchez C."/>
            <person name="Schoenfeld J."/>
            <person name="Seshagiri S."/>
            <person name="Simmons L."/>
            <person name="Singh J."/>
            <person name="Smith V."/>
            <person name="Stinson J."/>
            <person name="Vagts A."/>
            <person name="Vandlen R.L."/>
            <person name="Watanabe C."/>
            <person name="Wieand D."/>
            <person name="Woods K."/>
            <person name="Xie M.-H."/>
            <person name="Yansura D.G."/>
            <person name="Yi S."/>
            <person name="Yu G."/>
            <person name="Yuan J."/>
            <person name="Zhang M."/>
            <person name="Zhang Z."/>
            <person name="Goddard A.D."/>
            <person name="Wood W.I."/>
            <person name="Godowski P.J."/>
            <person name="Gray A.M."/>
        </authorList>
    </citation>
    <scope>NUCLEOTIDE SEQUENCE [LARGE SCALE MRNA] (ISOFORM 1)</scope>
</reference>
<reference key="3">
    <citation type="journal article" date="2007" name="BMC Genomics">
        <title>The full-ORF clone resource of the German cDNA consortium.</title>
        <authorList>
            <person name="Bechtel S."/>
            <person name="Rosenfelder H."/>
            <person name="Duda A."/>
            <person name="Schmidt C.P."/>
            <person name="Ernst U."/>
            <person name="Wellenreuther R."/>
            <person name="Mehrle A."/>
            <person name="Schuster C."/>
            <person name="Bahr A."/>
            <person name="Bloecker H."/>
            <person name="Heubner D."/>
            <person name="Hoerlein A."/>
            <person name="Michel G."/>
            <person name="Wedler H."/>
            <person name="Koehrer K."/>
            <person name="Ottenwaelder B."/>
            <person name="Poustka A."/>
            <person name="Wiemann S."/>
            <person name="Schupp I."/>
        </authorList>
    </citation>
    <scope>NUCLEOTIDE SEQUENCE [LARGE SCALE MRNA] (ISOFORM 2)</scope>
    <source>
        <tissue>Fetal brain</tissue>
    </source>
</reference>
<reference key="4">
    <citation type="journal article" date="2004" name="Genome Res.">
        <title>The status, quality, and expansion of the NIH full-length cDNA project: the Mammalian Gene Collection (MGC).</title>
        <authorList>
            <consortium name="The MGC Project Team"/>
        </authorList>
    </citation>
    <scope>NUCLEOTIDE SEQUENCE [LARGE SCALE MRNA] (ISOFORM 3)</scope>
    <source>
        <tissue>Lung</tissue>
    </source>
</reference>
<reference key="5">
    <citation type="journal article" date="2009" name="Nat. Genet.">
        <title>ccbe1 is required for embryonic lymphangiogenesis and venous sprouting.</title>
        <authorList>
            <person name="Hogan B.M."/>
            <person name="Bos F.L."/>
            <person name="Bussmann J."/>
            <person name="Witte M."/>
            <person name="Chi N.C."/>
            <person name="Duckers H.J."/>
            <person name="Schulte-Merker S."/>
        </authorList>
    </citation>
    <scope>TISSUE SPECIFICITY</scope>
</reference>
<reference key="6">
    <citation type="journal article" date="2009" name="Nat. Genet.">
        <title>Mutations in CCBE1 cause generalized lymph vessel dysplasia in humans.</title>
        <authorList>
            <person name="Alders M."/>
            <person name="Hogan B.M."/>
            <person name="Gjini E."/>
            <person name="Salehi F."/>
            <person name="Al-Gazali L."/>
            <person name="Hennekam E.A."/>
            <person name="Holmberg E.E."/>
            <person name="Mannens M.M."/>
            <person name="Mulder M.F."/>
            <person name="Offerhaus G.J."/>
            <person name="Prescott T.E."/>
            <person name="Schroor E.J."/>
            <person name="Verheij J.B."/>
            <person name="Witte M."/>
            <person name="Zwijnenburg P.J."/>
            <person name="Vikkula M."/>
            <person name="Schulte-Merker S."/>
            <person name="Hennekam R.C."/>
        </authorList>
    </citation>
    <scope>FUNCTION</scope>
    <scope>VARIANTS HKLLS1 SER-75; SER-102; CYS-158; ARG-174 AND ARG-327</scope>
</reference>
<reference key="7">
    <citation type="journal article" date="2014" name="J. Proteomics">
        <title>An enzyme assisted RP-RPLC approach for in-depth analysis of human liver phosphoproteome.</title>
        <authorList>
            <person name="Bian Y."/>
            <person name="Song C."/>
            <person name="Cheng K."/>
            <person name="Dong M."/>
            <person name="Wang F."/>
            <person name="Huang J."/>
            <person name="Sun D."/>
            <person name="Wang L."/>
            <person name="Ye M."/>
            <person name="Zou H."/>
        </authorList>
    </citation>
    <scope>IDENTIFICATION BY MASS SPECTROMETRY [LARGE SCALE ANALYSIS]</scope>
    <source>
        <tissue>Liver</tissue>
    </source>
</reference>
<reference key="8">
    <citation type="journal article" date="2015" name="Mol. Cell. Proteomics">
        <title>Identification of chondroitin sulfate linkage region glycopeptides reveals prohormones as a novel class of proteoglycans.</title>
        <authorList>
            <person name="Noborn F."/>
            <person name="Gomez Toledo A."/>
            <person name="Sihlbom C."/>
            <person name="Lengqvist J."/>
            <person name="Fries E."/>
            <person name="Kjellen L."/>
            <person name="Nilsson J."/>
            <person name="Larson G."/>
        </authorList>
    </citation>
    <scope>SUBCELLULAR LOCATION</scope>
    <scope>TISSUE SPECIFICITY</scope>
    <scope>GLYCOSYLATION AT SER-385</scope>
</reference>
<reference key="9">
    <citation type="journal article" date="2020" name="Glycobiology">
        <title>An affinity chromatography and glycoproteomics workflow to profile the chondroitin sulfate proteoglycans that interact with malarial VAR2CSA in the placenta and in cancer.</title>
        <authorList>
            <person name="Toledo A.G."/>
            <person name="Pihl J."/>
            <person name="Spliid C.B."/>
            <person name="Persson A."/>
            <person name="Nilsson J."/>
            <person name="Pereira M.A."/>
            <person name="Gustavsson T."/>
            <person name="Choudhary S."/>
            <person name="Oo H.Z."/>
            <person name="Black P.C."/>
            <person name="Daugaard M."/>
            <person name="Esko J.D."/>
            <person name="Larson G."/>
            <person name="Salanti A."/>
            <person name="Clausen T.M."/>
        </authorList>
    </citation>
    <scope>GLYCOSYLATION AT SER-385</scope>
</reference>
<reference key="10">
    <citation type="journal article" date="2022" name="J. Proteins Proteom.">
        <title>Mass spectrometric analysis of chondroitin sulfate-linked peptides.</title>
        <authorList>
            <person name="Ramarajan M.G."/>
            <person name="Saraswat M."/>
            <person name="Budhraja R."/>
            <person name="Garapati K."/>
            <person name="Raymond K."/>
            <person name="Pandey A."/>
        </authorList>
    </citation>
    <scope>SUBCELLULAR LOCATION</scope>
    <scope>TISSUE SPECIFICITY</scope>
    <scope>GLYCOSYLATION AT SER-385</scope>
</reference>
<reference key="11">
    <citation type="journal article" date="2023" name="Mol. Cell. Proteomics">
        <title>Mapping the Human Chondroitin Sulfate Glycoproteome Reveals an Unexpected Correlation Between Glycan Sulfation and Attachment Site Characteristics.</title>
        <authorList>
            <person name="Noborn F."/>
            <person name="Nilsson J."/>
            <person name="Sihlbom C."/>
            <person name="Nikpour M."/>
            <person name="Kjellen L."/>
            <person name="Larson G."/>
        </authorList>
    </citation>
    <scope>SUBCELLULAR LOCATION</scope>
    <scope>TISSUE SPECIFICITY</scope>
    <scope>GLYCOSYLATION AT SER-385</scope>
</reference>
<reference key="12">
    <citation type="journal article" date="2010" name="Hum. Genet.">
        <title>Linkage and sequence analysis indicate that CCBE1 is mutated in recessively inherited generalised lymphatic dysplasia.</title>
        <authorList>
            <person name="Connell F."/>
            <person name="Kalidas K."/>
            <person name="Ostergaard P."/>
            <person name="Brice G."/>
            <person name="Homfray T."/>
            <person name="Roberts L."/>
            <person name="Bunyan D.J."/>
            <person name="Mitton S."/>
            <person name="Mansour S."/>
            <person name="Mortimer P."/>
            <person name="Jeffery S."/>
        </authorList>
    </citation>
    <scope>VARIANT HKLLS1 SER-75</scope>
</reference>
<reference key="13">
    <citation type="journal article" date="2010" name="Hum. Genet.">
        <authorList>
            <person name="Connell F."/>
            <person name="Kalidas K."/>
            <person name="Ostergaard P."/>
            <person name="Brice G."/>
            <person name="Homfray T."/>
            <person name="Roberts L."/>
            <person name="Bunyan D.J."/>
            <person name="Mitton S."/>
            <person name="Mansour S."/>
            <person name="Mortimer P."/>
            <person name="Jeffery S."/>
        </authorList>
    </citation>
    <scope>ERRATUM OF PUBMED:19911200</scope>
</reference>
<name>CCBE1_HUMAN</name>
<proteinExistence type="evidence at protein level"/>
<organism>
    <name type="scientific">Homo sapiens</name>
    <name type="common">Human</name>
    <dbReference type="NCBI Taxonomy" id="9606"/>
    <lineage>
        <taxon>Eukaryota</taxon>
        <taxon>Metazoa</taxon>
        <taxon>Chordata</taxon>
        <taxon>Craniata</taxon>
        <taxon>Vertebrata</taxon>
        <taxon>Euteleostomi</taxon>
        <taxon>Mammalia</taxon>
        <taxon>Eutheria</taxon>
        <taxon>Euarchontoglires</taxon>
        <taxon>Primates</taxon>
        <taxon>Haplorrhini</taxon>
        <taxon>Catarrhini</taxon>
        <taxon>Hominidae</taxon>
        <taxon>Homo</taxon>
    </lineage>
</organism>
<protein>
    <recommendedName>
        <fullName>Collagen and calcium-binding EGF domain-containing protein 1</fullName>
    </recommendedName>
    <alternativeName>
        <fullName>Full of fluid protein homolog</fullName>
    </alternativeName>
</protein>
<evidence type="ECO:0000255" key="1"/>
<evidence type="ECO:0000255" key="2">
    <source>
        <dbReference type="PROSITE-ProRule" id="PRU00076"/>
    </source>
</evidence>
<evidence type="ECO:0000256" key="3">
    <source>
        <dbReference type="SAM" id="MobiDB-lite"/>
    </source>
</evidence>
<evidence type="ECO:0000269" key="4">
    <source>
    </source>
</evidence>
<evidence type="ECO:0000269" key="5">
    <source>
    </source>
</evidence>
<evidence type="ECO:0000269" key="6">
    <source>
    </source>
</evidence>
<evidence type="ECO:0000269" key="7">
    <source>
    </source>
</evidence>
<evidence type="ECO:0000269" key="8">
    <source>
    </source>
</evidence>
<evidence type="ECO:0000269" key="9">
    <source>
    </source>
</evidence>
<evidence type="ECO:0000269" key="10">
    <source>
    </source>
</evidence>
<evidence type="ECO:0000303" key="11">
    <source>
    </source>
</evidence>
<evidence type="ECO:0000303" key="12">
    <source>
    </source>
</evidence>
<evidence type="ECO:0000305" key="13"/>
<keyword id="KW-0025">Alternative splicing</keyword>
<keyword id="KW-0037">Angiogenesis</keyword>
<keyword id="KW-0106">Calcium</keyword>
<keyword id="KW-0176">Collagen</keyword>
<keyword id="KW-0217">Developmental protein</keyword>
<keyword id="KW-0225">Disease variant</keyword>
<keyword id="KW-1015">Disulfide bond</keyword>
<keyword id="KW-0245">EGF-like domain</keyword>
<keyword id="KW-0325">Glycoprotein</keyword>
<keyword id="KW-0991">Intellectual disability</keyword>
<keyword id="KW-0654">Proteoglycan</keyword>
<keyword id="KW-1267">Proteomics identification</keyword>
<keyword id="KW-1185">Reference proteome</keyword>
<keyword id="KW-0677">Repeat</keyword>
<keyword id="KW-0964">Secreted</keyword>
<keyword id="KW-0732">Signal</keyword>
<dbReference type="EMBL" id="AB075863">
    <property type="protein sequence ID" value="BAB85569.1"/>
    <property type="status" value="ALT_INIT"/>
    <property type="molecule type" value="mRNA"/>
</dbReference>
<dbReference type="EMBL" id="AY358347">
    <property type="protein sequence ID" value="AAQ88713.1"/>
    <property type="molecule type" value="mRNA"/>
</dbReference>
<dbReference type="EMBL" id="BX640826">
    <property type="protein sequence ID" value="CAE45902.1"/>
    <property type="molecule type" value="mRNA"/>
</dbReference>
<dbReference type="EMBL" id="BC046645">
    <property type="protein sequence ID" value="AAH46645.1"/>
    <property type="molecule type" value="mRNA"/>
</dbReference>
<dbReference type="CCDS" id="CCDS32838.1">
    <molecule id="Q6UXH8-1"/>
</dbReference>
<dbReference type="RefSeq" id="NP_597716.1">
    <molecule id="Q6UXH8-1"/>
    <property type="nucleotide sequence ID" value="NM_133459.4"/>
</dbReference>
<dbReference type="RefSeq" id="XP_024306859.1">
    <molecule id="Q6UXH8-1"/>
    <property type="nucleotide sequence ID" value="XM_024451091.2"/>
</dbReference>
<dbReference type="RefSeq" id="XP_047293258.1">
    <molecule id="Q6UXH8-1"/>
    <property type="nucleotide sequence ID" value="XM_047437302.1"/>
</dbReference>
<dbReference type="RefSeq" id="XP_054174182.1">
    <molecule id="Q6UXH8-1"/>
    <property type="nucleotide sequence ID" value="XM_054318207.1"/>
</dbReference>
<dbReference type="RefSeq" id="XP_054174183.1">
    <molecule id="Q6UXH8-1"/>
    <property type="nucleotide sequence ID" value="XM_054318208.1"/>
</dbReference>
<dbReference type="BioGRID" id="127056">
    <property type="interactions" value="20"/>
</dbReference>
<dbReference type="FunCoup" id="Q6UXH8">
    <property type="interactions" value="138"/>
</dbReference>
<dbReference type="IntAct" id="Q6UXH8">
    <property type="interactions" value="19"/>
</dbReference>
<dbReference type="MINT" id="Q6UXH8"/>
<dbReference type="STRING" id="9606.ENSP00000497183"/>
<dbReference type="GlyCosmos" id="Q6UXH8">
    <property type="glycosylation" value="2 sites, No reported glycans"/>
</dbReference>
<dbReference type="GlyGen" id="Q6UXH8">
    <property type="glycosylation" value="4 sites, 1 O-linked glycan (1 site)"/>
</dbReference>
<dbReference type="iPTMnet" id="Q6UXH8"/>
<dbReference type="PhosphoSitePlus" id="Q6UXH8"/>
<dbReference type="BioMuta" id="CCBE1"/>
<dbReference type="DMDM" id="74738220"/>
<dbReference type="jPOST" id="Q6UXH8"/>
<dbReference type="MassIVE" id="Q6UXH8"/>
<dbReference type="PaxDb" id="9606-ENSP00000404464"/>
<dbReference type="PeptideAtlas" id="Q6UXH8"/>
<dbReference type="ProteomicsDB" id="67622">
    <molecule id="Q6UXH8-1"/>
</dbReference>
<dbReference type="Antibodypedia" id="22986">
    <property type="antibodies" value="189 antibodies from 28 providers"/>
</dbReference>
<dbReference type="DNASU" id="147372"/>
<dbReference type="Ensembl" id="ENST00000439986.9">
    <molecule id="Q6UXH8-1"/>
    <property type="protein sequence ID" value="ENSP00000404464.2"/>
    <property type="gene ID" value="ENSG00000183287.15"/>
</dbReference>
<dbReference type="Ensembl" id="ENST00000649564.1">
    <molecule id="Q6UXH8-1"/>
    <property type="protein sequence ID" value="ENSP00000497183.1"/>
    <property type="gene ID" value="ENSG00000183287.15"/>
</dbReference>
<dbReference type="GeneID" id="147372"/>
<dbReference type="KEGG" id="hsa:147372"/>
<dbReference type="MANE-Select" id="ENST00000439986.9">
    <property type="protein sequence ID" value="ENSP00000404464.2"/>
    <property type="RefSeq nucleotide sequence ID" value="NM_133459.4"/>
    <property type="RefSeq protein sequence ID" value="NP_597716.1"/>
</dbReference>
<dbReference type="UCSC" id="uc002lib.4">
    <molecule id="Q6UXH8-1"/>
    <property type="organism name" value="human"/>
</dbReference>
<dbReference type="AGR" id="HGNC:29426"/>
<dbReference type="CTD" id="147372"/>
<dbReference type="DisGeNET" id="147372"/>
<dbReference type="GeneCards" id="CCBE1"/>
<dbReference type="HGNC" id="HGNC:29426">
    <property type="gene designation" value="CCBE1"/>
</dbReference>
<dbReference type="HPA" id="ENSG00000183287">
    <property type="expression patterns" value="Tissue enhanced (ovary)"/>
</dbReference>
<dbReference type="MalaCards" id="CCBE1"/>
<dbReference type="MIM" id="235510">
    <property type="type" value="phenotype"/>
</dbReference>
<dbReference type="MIM" id="612753">
    <property type="type" value="gene"/>
</dbReference>
<dbReference type="neXtProt" id="NX_Q6UXH8"/>
<dbReference type="OpenTargets" id="ENSG00000183287"/>
<dbReference type="Orphanet" id="2136">
    <property type="disease" value="Hennekam syndrome"/>
</dbReference>
<dbReference type="PharmGKB" id="PA134880094"/>
<dbReference type="VEuPathDB" id="HostDB:ENSG00000183287"/>
<dbReference type="eggNOG" id="KOG1218">
    <property type="taxonomic scope" value="Eukaryota"/>
</dbReference>
<dbReference type="GeneTree" id="ENSGT00390000014907"/>
<dbReference type="InParanoid" id="Q6UXH8"/>
<dbReference type="OMA" id="VMKAGTC"/>
<dbReference type="OrthoDB" id="9946071at2759"/>
<dbReference type="PAN-GO" id="Q6UXH8">
    <property type="GO annotations" value="0 GO annotations based on evolutionary models"/>
</dbReference>
<dbReference type="PhylomeDB" id="Q6UXH8"/>
<dbReference type="TreeFam" id="TF333138"/>
<dbReference type="PathwayCommons" id="Q6UXH8"/>
<dbReference type="SignaLink" id="Q6UXH8"/>
<dbReference type="BioGRID-ORCS" id="147372">
    <property type="hits" value="8 hits in 1146 CRISPR screens"/>
</dbReference>
<dbReference type="ChiTaRS" id="CCBE1">
    <property type="organism name" value="human"/>
</dbReference>
<dbReference type="GeneWiki" id="CCBE1"/>
<dbReference type="GenomeRNAi" id="147372"/>
<dbReference type="Pharos" id="Q6UXH8">
    <property type="development level" value="Tbio"/>
</dbReference>
<dbReference type="PRO" id="PR:Q6UXH8"/>
<dbReference type="Proteomes" id="UP000005640">
    <property type="component" value="Chromosome 18"/>
</dbReference>
<dbReference type="RNAct" id="Q6UXH8">
    <property type="molecule type" value="protein"/>
</dbReference>
<dbReference type="Bgee" id="ENSG00000183287">
    <property type="expression patterns" value="Expressed in secondary oocyte and 136 other cell types or tissues"/>
</dbReference>
<dbReference type="ExpressionAtlas" id="Q6UXH8">
    <property type="expression patterns" value="baseline and differential"/>
</dbReference>
<dbReference type="GO" id="GO:0005581">
    <property type="term" value="C:collagen trimer"/>
    <property type="evidence" value="ECO:0007669"/>
    <property type="project" value="UniProtKB-KW"/>
</dbReference>
<dbReference type="GO" id="GO:0031012">
    <property type="term" value="C:extracellular matrix"/>
    <property type="evidence" value="ECO:0000314"/>
    <property type="project" value="MGI"/>
</dbReference>
<dbReference type="GO" id="GO:0005615">
    <property type="term" value="C:extracellular space"/>
    <property type="evidence" value="ECO:0000314"/>
    <property type="project" value="BHF-UCL"/>
</dbReference>
<dbReference type="GO" id="GO:0005509">
    <property type="term" value="F:calcium ion binding"/>
    <property type="evidence" value="ECO:0007669"/>
    <property type="project" value="InterPro"/>
</dbReference>
<dbReference type="GO" id="GO:0005518">
    <property type="term" value="F:collagen binding"/>
    <property type="evidence" value="ECO:0000314"/>
    <property type="project" value="MGI"/>
</dbReference>
<dbReference type="GO" id="GO:0002020">
    <property type="term" value="F:protease binding"/>
    <property type="evidence" value="ECO:0000353"/>
    <property type="project" value="BHF-UCL"/>
</dbReference>
<dbReference type="GO" id="GO:0030324">
    <property type="term" value="P:lung development"/>
    <property type="evidence" value="ECO:0007669"/>
    <property type="project" value="Ensembl"/>
</dbReference>
<dbReference type="GO" id="GO:0001946">
    <property type="term" value="P:lymphangiogenesis"/>
    <property type="evidence" value="ECO:0000315"/>
    <property type="project" value="UniProtKB"/>
</dbReference>
<dbReference type="GO" id="GO:1904977">
    <property type="term" value="P:lymphatic endothelial cell migration"/>
    <property type="evidence" value="ECO:0007669"/>
    <property type="project" value="Ensembl"/>
</dbReference>
<dbReference type="GO" id="GO:0045766">
    <property type="term" value="P:positive regulation of angiogenesis"/>
    <property type="evidence" value="ECO:0007669"/>
    <property type="project" value="Ensembl"/>
</dbReference>
<dbReference type="GO" id="GO:0010595">
    <property type="term" value="P:positive regulation of endothelial cell migration"/>
    <property type="evidence" value="ECO:0007669"/>
    <property type="project" value="Ensembl"/>
</dbReference>
<dbReference type="GO" id="GO:1901492">
    <property type="term" value="P:positive regulation of lymphangiogenesis"/>
    <property type="evidence" value="ECO:0007669"/>
    <property type="project" value="Ensembl"/>
</dbReference>
<dbReference type="GO" id="GO:0010954">
    <property type="term" value="P:positive regulation of protein processing"/>
    <property type="evidence" value="ECO:0000314"/>
    <property type="project" value="BHF-UCL"/>
</dbReference>
<dbReference type="GO" id="GO:0010575">
    <property type="term" value="P:positive regulation of vascular endothelial growth factor production"/>
    <property type="evidence" value="ECO:0000314"/>
    <property type="project" value="BHF-UCL"/>
</dbReference>
<dbReference type="GO" id="GO:1900748">
    <property type="term" value="P:positive regulation of vascular endothelial growth factor signaling pathway"/>
    <property type="evidence" value="ECO:0000314"/>
    <property type="project" value="BHF-UCL"/>
</dbReference>
<dbReference type="GO" id="GO:0003016">
    <property type="term" value="P:respiratory system process"/>
    <property type="evidence" value="ECO:0007669"/>
    <property type="project" value="Ensembl"/>
</dbReference>
<dbReference type="GO" id="GO:0002040">
    <property type="term" value="P:sprouting angiogenesis"/>
    <property type="evidence" value="ECO:0000250"/>
    <property type="project" value="UniProtKB"/>
</dbReference>
<dbReference type="GO" id="GO:0048845">
    <property type="term" value="P:venous blood vessel morphogenesis"/>
    <property type="evidence" value="ECO:0000250"/>
    <property type="project" value="UniProtKB"/>
</dbReference>
<dbReference type="CDD" id="cd00054">
    <property type="entry name" value="EGF_CA"/>
    <property type="match status" value="1"/>
</dbReference>
<dbReference type="FunFam" id="2.10.25.10:FF:000010">
    <property type="entry name" value="Pro-epidermal growth factor"/>
    <property type="match status" value="1"/>
</dbReference>
<dbReference type="Gene3D" id="2.10.25.10">
    <property type="entry name" value="Laminin"/>
    <property type="match status" value="2"/>
</dbReference>
<dbReference type="InterPro" id="IPR008160">
    <property type="entry name" value="Collagen"/>
</dbReference>
<dbReference type="InterPro" id="IPR001881">
    <property type="entry name" value="EGF-like_Ca-bd_dom"/>
</dbReference>
<dbReference type="InterPro" id="IPR000742">
    <property type="entry name" value="EGF-like_dom"/>
</dbReference>
<dbReference type="InterPro" id="IPR000152">
    <property type="entry name" value="EGF-type_Asp/Asn_hydroxyl_site"/>
</dbReference>
<dbReference type="InterPro" id="IPR018097">
    <property type="entry name" value="EGF_Ca-bd_CS"/>
</dbReference>
<dbReference type="InterPro" id="IPR049883">
    <property type="entry name" value="NOTCH1_EGF-like"/>
</dbReference>
<dbReference type="PANTHER" id="PTHR24637">
    <property type="entry name" value="COLLAGEN"/>
    <property type="match status" value="1"/>
</dbReference>
<dbReference type="PANTHER" id="PTHR24637:SF396">
    <property type="entry name" value="COLLAGEN AND CALCIUM BINDING EGF DOMAINS 1"/>
    <property type="match status" value="1"/>
</dbReference>
<dbReference type="Pfam" id="PF01391">
    <property type="entry name" value="Collagen"/>
    <property type="match status" value="1"/>
</dbReference>
<dbReference type="Pfam" id="PF07645">
    <property type="entry name" value="EGF_CA"/>
    <property type="match status" value="1"/>
</dbReference>
<dbReference type="SMART" id="SM00181">
    <property type="entry name" value="EGF"/>
    <property type="match status" value="2"/>
</dbReference>
<dbReference type="SMART" id="SM00179">
    <property type="entry name" value="EGF_CA"/>
    <property type="match status" value="2"/>
</dbReference>
<dbReference type="SUPFAM" id="SSF57196">
    <property type="entry name" value="EGF/Laminin"/>
    <property type="match status" value="2"/>
</dbReference>
<dbReference type="PROSITE" id="PS00010">
    <property type="entry name" value="ASX_HYDROXYL"/>
    <property type="match status" value="1"/>
</dbReference>
<dbReference type="PROSITE" id="PS01186">
    <property type="entry name" value="EGF_2"/>
    <property type="match status" value="1"/>
</dbReference>
<dbReference type="PROSITE" id="PS50026">
    <property type="entry name" value="EGF_3"/>
    <property type="match status" value="1"/>
</dbReference>
<dbReference type="PROSITE" id="PS01187">
    <property type="entry name" value="EGF_CA"/>
    <property type="match status" value="1"/>
</dbReference>
<comment type="function">
    <text evidence="6">Required for lymphangioblast budding and angiogenic sprouting from venous endothelium during embryogenesis.</text>
</comment>
<comment type="interaction">
    <interactant intactId="EBI-3923278">
        <id>Q6UXH8</id>
    </interactant>
    <interactant intactId="EBI-747776">
        <id>Q53EZ4</id>
        <label>CEP55</label>
    </interactant>
    <organismsDiffer>false</organismsDiffer>
    <experiments>3</experiments>
</comment>
<comment type="interaction">
    <interactant intactId="EBI-3923278">
        <id>Q6UXH8</id>
    </interactant>
    <interactant intactId="EBI-740929">
        <id>Q53G59</id>
        <label>KLHL12</label>
    </interactant>
    <organismsDiffer>false</organismsDiffer>
    <experiments>3</experiments>
</comment>
<comment type="interaction">
    <interactant intactId="EBI-3923278">
        <id>Q6UXH8</id>
    </interactant>
    <interactant intactId="EBI-714135">
        <id>O75558</id>
        <label>STX11</label>
    </interactant>
    <organismsDiffer>false</organismsDiffer>
    <experiments>3</experiments>
</comment>
<comment type="interaction">
    <interactant intactId="EBI-12013534">
        <id>Q6UXH8-3</id>
    </interactant>
    <interactant intactId="EBI-747776">
        <id>Q53EZ4</id>
        <label>CEP55</label>
    </interactant>
    <organismsDiffer>false</organismsDiffer>
    <experiments>3</experiments>
</comment>
<comment type="interaction">
    <interactant intactId="EBI-12013534">
        <id>Q6UXH8-3</id>
    </interactant>
    <interactant intactId="EBI-486838">
        <id>Q7L5N1</id>
        <label>COPS6</label>
    </interactant>
    <organismsDiffer>false</organismsDiffer>
    <experiments>3</experiments>
</comment>
<comment type="interaction">
    <interactant intactId="EBI-12013534">
        <id>Q6UXH8-3</id>
    </interactant>
    <interactant intactId="EBI-6509505">
        <id>Q0VD86</id>
        <label>INCA1</label>
    </interactant>
    <organismsDiffer>false</organismsDiffer>
    <experiments>3</experiments>
</comment>
<comment type="interaction">
    <interactant intactId="EBI-12013534">
        <id>Q6UXH8-3</id>
    </interactant>
    <interactant intactId="EBI-740929">
        <id>Q53G59</id>
        <label>KLHL12</label>
    </interactant>
    <organismsDiffer>false</organismsDiffer>
    <experiments>3</experiments>
</comment>
<comment type="interaction">
    <interactant intactId="EBI-12013534">
        <id>Q6UXH8-3</id>
    </interactant>
    <interactant intactId="EBI-3044087">
        <id>Q7Z3Y8</id>
        <label>KRT27</label>
    </interactant>
    <organismsDiffer>false</organismsDiffer>
    <experiments>3</experiments>
</comment>
<comment type="interaction">
    <interactant intactId="EBI-12013534">
        <id>Q6UXH8-3</id>
    </interactant>
    <interactant intactId="EBI-11958506">
        <id>O76013-2</id>
        <label>KRT36</label>
    </interactant>
    <organismsDiffer>false</organismsDiffer>
    <experiments>3</experiments>
</comment>
<comment type="interaction">
    <interactant intactId="EBI-12013534">
        <id>Q6UXH8-3</id>
    </interactant>
    <interactant intactId="EBI-739832">
        <id>Q8TBB1</id>
        <label>LNX1</label>
    </interactant>
    <organismsDiffer>false</organismsDiffer>
    <experiments>3</experiments>
</comment>
<comment type="interaction">
    <interactant intactId="EBI-12013534">
        <id>Q6UXH8-3</id>
    </interactant>
    <interactant intactId="EBI-50433196">
        <id>A0A6Q8PF08</id>
        <label>PMP22</label>
    </interactant>
    <organismsDiffer>false</organismsDiffer>
    <experiments>3</experiments>
</comment>
<comment type="subcellular location">
    <subcellularLocation>
        <location evidence="7 9 10">Secreted</location>
    </subcellularLocation>
</comment>
<comment type="alternative products">
    <event type="alternative splicing"/>
    <isoform>
        <id>Q6UXH8-1</id>
        <name>1</name>
        <sequence type="displayed"/>
    </isoform>
    <isoform>
        <id>Q6UXH8-2</id>
        <name>2</name>
        <sequence type="described" ref="VSP_023470 VSP_023471"/>
    </isoform>
    <isoform>
        <id>Q6UXH8-3</id>
        <name>3</name>
        <sequence type="described" ref="VSP_023469"/>
    </isoform>
</comment>
<comment type="tissue specificity">
    <text evidence="4 7 9 10">Detected in fibroblasts and urine (at protein level) (PubMed:25326458, PubMed:36213313, PubMed:37453717). Not expressed in blood or lymphatic endothelial cells.</text>
</comment>
<comment type="disease" evidence="5 6">
    <disease id="DI-02804">
        <name>Hennekam lymphangiectasia-lymphedema syndrome 1</name>
        <acronym>HKLLS1</acronym>
        <description>A form of Hennekam lymphangiectasia-lymphedema syndrome, a generalized lymph-vessels dysplasia characterized by intestinal lymphangiectasia with severe lymphedema of the limbs, genitalia and face. In addition, affected individuals have unusual facies and some manifest intellectual disability. HKLLS1 inheritance is autosomal recessive.</description>
        <dbReference type="MIM" id="235510"/>
    </disease>
    <text>The disease is caused by variants affecting the gene represented in this entry.</text>
</comment>
<comment type="similarity">
    <text evidence="13">Belongs to the CCBE1 family.</text>
</comment>
<comment type="sequence caution" evidence="13">
    <conflict type="erroneous initiation">
        <sequence resource="EMBL-CDS" id="BAB85569"/>
    </conflict>
</comment>